<comment type="function">
    <text evidence="1">Catalyzes the transfer of a phosphate group to glutamate to form L-glutamate 5-phosphate.</text>
</comment>
<comment type="catalytic activity">
    <reaction evidence="1">
        <text>L-glutamate + ATP = L-glutamyl 5-phosphate + ADP</text>
        <dbReference type="Rhea" id="RHEA:14877"/>
        <dbReference type="ChEBI" id="CHEBI:29985"/>
        <dbReference type="ChEBI" id="CHEBI:30616"/>
        <dbReference type="ChEBI" id="CHEBI:58274"/>
        <dbReference type="ChEBI" id="CHEBI:456216"/>
        <dbReference type="EC" id="2.7.2.11"/>
    </reaction>
</comment>
<comment type="pathway">
    <text evidence="1">Amino-acid biosynthesis; L-proline biosynthesis; L-glutamate 5-semialdehyde from L-glutamate: step 1/2.</text>
</comment>
<comment type="subcellular location">
    <subcellularLocation>
        <location evidence="1">Cytoplasm</location>
    </subcellularLocation>
</comment>
<comment type="similarity">
    <text evidence="1">Belongs to the glutamate 5-kinase family.</text>
</comment>
<proteinExistence type="inferred from homology"/>
<protein>
    <recommendedName>
        <fullName evidence="1">Glutamate 5-kinase</fullName>
        <ecNumber evidence="1">2.7.2.11</ecNumber>
    </recommendedName>
    <alternativeName>
        <fullName evidence="1">Gamma-glutamyl kinase</fullName>
        <shortName evidence="1">GK</shortName>
    </alternativeName>
</protein>
<organism>
    <name type="scientific">Pectobacterium atrosepticum (strain SCRI 1043 / ATCC BAA-672)</name>
    <name type="common">Erwinia carotovora subsp. atroseptica</name>
    <dbReference type="NCBI Taxonomy" id="218491"/>
    <lineage>
        <taxon>Bacteria</taxon>
        <taxon>Pseudomonadati</taxon>
        <taxon>Pseudomonadota</taxon>
        <taxon>Gammaproteobacteria</taxon>
        <taxon>Enterobacterales</taxon>
        <taxon>Pectobacteriaceae</taxon>
        <taxon>Pectobacterium</taxon>
    </lineage>
</organism>
<keyword id="KW-0028">Amino-acid biosynthesis</keyword>
<keyword id="KW-0067">ATP-binding</keyword>
<keyword id="KW-0963">Cytoplasm</keyword>
<keyword id="KW-0418">Kinase</keyword>
<keyword id="KW-0547">Nucleotide-binding</keyword>
<keyword id="KW-0641">Proline biosynthesis</keyword>
<keyword id="KW-1185">Reference proteome</keyword>
<keyword id="KW-0808">Transferase</keyword>
<reference key="1">
    <citation type="journal article" date="2004" name="Proc. Natl. Acad. Sci. U.S.A.">
        <title>Genome sequence of the enterobacterial phytopathogen Erwinia carotovora subsp. atroseptica and characterization of virulence factors.</title>
        <authorList>
            <person name="Bell K.S."/>
            <person name="Sebaihia M."/>
            <person name="Pritchard L."/>
            <person name="Holden M.T.G."/>
            <person name="Hyman L.J."/>
            <person name="Holeva M.C."/>
            <person name="Thomson N.R."/>
            <person name="Bentley S.D."/>
            <person name="Churcher L.J.C."/>
            <person name="Mungall K."/>
            <person name="Atkin R."/>
            <person name="Bason N."/>
            <person name="Brooks K."/>
            <person name="Chillingworth T."/>
            <person name="Clark K."/>
            <person name="Doggett J."/>
            <person name="Fraser A."/>
            <person name="Hance Z."/>
            <person name="Hauser H."/>
            <person name="Jagels K."/>
            <person name="Moule S."/>
            <person name="Norbertczak H."/>
            <person name="Ormond D."/>
            <person name="Price C."/>
            <person name="Quail M.A."/>
            <person name="Sanders M."/>
            <person name="Walker D."/>
            <person name="Whitehead S."/>
            <person name="Salmond G.P.C."/>
            <person name="Birch P.R.J."/>
            <person name="Parkhill J."/>
            <person name="Toth I.K."/>
        </authorList>
    </citation>
    <scope>NUCLEOTIDE SEQUENCE [LARGE SCALE GENOMIC DNA]</scope>
    <source>
        <strain>SCRI 1043 / ATCC BAA-672</strain>
    </source>
</reference>
<gene>
    <name evidence="1" type="primary">proB</name>
    <name type="ordered locus">ECA3463</name>
</gene>
<accession>Q6D1I3</accession>
<sequence length="367" mass="39037">MSGSQTLVVKLGTSVLTGGSRRLNRAHIVELVRQCAQQHAAGHRIVIVTSGAIAAGREHLGYPELPATIATKQLLAAVGQSRLIQLWEQLFSIYGIHVGQMLLTRADMEDRERFLNARDTMRALLDNNIVPVINENDAVATAEIKVGDNDNLSALAAILADADKLLLLTDQAGLFTADPRNNPDAELIREVTGINDALRSIAGDSVSGLGTGGMSTKLQAADVACRAGIDVVIAAGSKPGVIGDVIADISVGTRFHALDTPLESRKHWIFGAPPAGEITVDDGALSAILERGSSLLPKGIRTVEGNFSRGEVIRVRSLAGRDVAHAVTRYNSDALRLIAGHHSQQIAEILGYEYGPVAIHRDDMIIN</sequence>
<name>PROB_PECAS</name>
<evidence type="ECO:0000255" key="1">
    <source>
        <dbReference type="HAMAP-Rule" id="MF_00456"/>
    </source>
</evidence>
<feature type="chain" id="PRO_0000109673" description="Glutamate 5-kinase">
    <location>
        <begin position="1"/>
        <end position="367"/>
    </location>
</feature>
<feature type="domain" description="PUA" evidence="1">
    <location>
        <begin position="275"/>
        <end position="353"/>
    </location>
</feature>
<feature type="binding site" evidence="1">
    <location>
        <position position="10"/>
    </location>
    <ligand>
        <name>ATP</name>
        <dbReference type="ChEBI" id="CHEBI:30616"/>
    </ligand>
</feature>
<feature type="binding site" evidence="1">
    <location>
        <position position="50"/>
    </location>
    <ligand>
        <name>substrate</name>
    </ligand>
</feature>
<feature type="binding site" evidence="1">
    <location>
        <position position="137"/>
    </location>
    <ligand>
        <name>substrate</name>
    </ligand>
</feature>
<feature type="binding site" evidence="1">
    <location>
        <position position="149"/>
    </location>
    <ligand>
        <name>substrate</name>
    </ligand>
</feature>
<feature type="binding site" evidence="1">
    <location>
        <begin position="169"/>
        <end position="170"/>
    </location>
    <ligand>
        <name>ATP</name>
        <dbReference type="ChEBI" id="CHEBI:30616"/>
    </ligand>
</feature>
<feature type="binding site" evidence="1">
    <location>
        <begin position="211"/>
        <end position="217"/>
    </location>
    <ligand>
        <name>ATP</name>
        <dbReference type="ChEBI" id="CHEBI:30616"/>
    </ligand>
</feature>
<dbReference type="EC" id="2.7.2.11" evidence="1"/>
<dbReference type="EMBL" id="BX950851">
    <property type="protein sequence ID" value="CAG76362.1"/>
    <property type="molecule type" value="Genomic_DNA"/>
</dbReference>
<dbReference type="RefSeq" id="WP_011094971.1">
    <property type="nucleotide sequence ID" value="NC_004547.2"/>
</dbReference>
<dbReference type="SMR" id="Q6D1I3"/>
<dbReference type="STRING" id="218491.ECA3463"/>
<dbReference type="GeneID" id="57210132"/>
<dbReference type="KEGG" id="eca:ECA3463"/>
<dbReference type="PATRIC" id="fig|218491.5.peg.3503"/>
<dbReference type="eggNOG" id="COG0263">
    <property type="taxonomic scope" value="Bacteria"/>
</dbReference>
<dbReference type="HOGENOM" id="CLU_025400_2_0_6"/>
<dbReference type="OrthoDB" id="9804434at2"/>
<dbReference type="UniPathway" id="UPA00098">
    <property type="reaction ID" value="UER00359"/>
</dbReference>
<dbReference type="Proteomes" id="UP000007966">
    <property type="component" value="Chromosome"/>
</dbReference>
<dbReference type="GO" id="GO:0005829">
    <property type="term" value="C:cytosol"/>
    <property type="evidence" value="ECO:0007669"/>
    <property type="project" value="TreeGrafter"/>
</dbReference>
<dbReference type="GO" id="GO:0005524">
    <property type="term" value="F:ATP binding"/>
    <property type="evidence" value="ECO:0007669"/>
    <property type="project" value="UniProtKB-KW"/>
</dbReference>
<dbReference type="GO" id="GO:0004349">
    <property type="term" value="F:glutamate 5-kinase activity"/>
    <property type="evidence" value="ECO:0007669"/>
    <property type="project" value="UniProtKB-UniRule"/>
</dbReference>
<dbReference type="GO" id="GO:0003723">
    <property type="term" value="F:RNA binding"/>
    <property type="evidence" value="ECO:0007669"/>
    <property type="project" value="InterPro"/>
</dbReference>
<dbReference type="GO" id="GO:0055129">
    <property type="term" value="P:L-proline biosynthetic process"/>
    <property type="evidence" value="ECO:0007669"/>
    <property type="project" value="UniProtKB-UniRule"/>
</dbReference>
<dbReference type="CDD" id="cd04242">
    <property type="entry name" value="AAK_G5K_ProB"/>
    <property type="match status" value="1"/>
</dbReference>
<dbReference type="CDD" id="cd21157">
    <property type="entry name" value="PUA_G5K"/>
    <property type="match status" value="1"/>
</dbReference>
<dbReference type="FunFam" id="2.30.130.10:FF:000003">
    <property type="entry name" value="Glutamate 5-kinase"/>
    <property type="match status" value="1"/>
</dbReference>
<dbReference type="FunFam" id="3.40.1160.10:FF:000006">
    <property type="entry name" value="Glutamate 5-kinase"/>
    <property type="match status" value="1"/>
</dbReference>
<dbReference type="Gene3D" id="3.40.1160.10">
    <property type="entry name" value="Acetylglutamate kinase-like"/>
    <property type="match status" value="1"/>
</dbReference>
<dbReference type="Gene3D" id="2.30.130.10">
    <property type="entry name" value="PUA domain"/>
    <property type="match status" value="1"/>
</dbReference>
<dbReference type="HAMAP" id="MF_00456">
    <property type="entry name" value="ProB"/>
    <property type="match status" value="1"/>
</dbReference>
<dbReference type="InterPro" id="IPR036393">
    <property type="entry name" value="AceGlu_kinase-like_sf"/>
</dbReference>
<dbReference type="InterPro" id="IPR001048">
    <property type="entry name" value="Asp/Glu/Uridylate_kinase"/>
</dbReference>
<dbReference type="InterPro" id="IPR041739">
    <property type="entry name" value="G5K_ProB"/>
</dbReference>
<dbReference type="InterPro" id="IPR001057">
    <property type="entry name" value="Glu/AcGlu_kinase"/>
</dbReference>
<dbReference type="InterPro" id="IPR011529">
    <property type="entry name" value="Glu_5kinase"/>
</dbReference>
<dbReference type="InterPro" id="IPR005715">
    <property type="entry name" value="Glu_5kinase/COase_Synthase"/>
</dbReference>
<dbReference type="InterPro" id="IPR019797">
    <property type="entry name" value="Glutamate_5-kinase_CS"/>
</dbReference>
<dbReference type="InterPro" id="IPR002478">
    <property type="entry name" value="PUA"/>
</dbReference>
<dbReference type="InterPro" id="IPR015947">
    <property type="entry name" value="PUA-like_sf"/>
</dbReference>
<dbReference type="InterPro" id="IPR036974">
    <property type="entry name" value="PUA_sf"/>
</dbReference>
<dbReference type="NCBIfam" id="TIGR01027">
    <property type="entry name" value="proB"/>
    <property type="match status" value="1"/>
</dbReference>
<dbReference type="PANTHER" id="PTHR43654">
    <property type="entry name" value="GLUTAMATE 5-KINASE"/>
    <property type="match status" value="1"/>
</dbReference>
<dbReference type="PANTHER" id="PTHR43654:SF1">
    <property type="entry name" value="ISOPENTENYL PHOSPHATE KINASE"/>
    <property type="match status" value="1"/>
</dbReference>
<dbReference type="Pfam" id="PF00696">
    <property type="entry name" value="AA_kinase"/>
    <property type="match status" value="1"/>
</dbReference>
<dbReference type="Pfam" id="PF01472">
    <property type="entry name" value="PUA"/>
    <property type="match status" value="1"/>
</dbReference>
<dbReference type="PIRSF" id="PIRSF000729">
    <property type="entry name" value="GK"/>
    <property type="match status" value="1"/>
</dbReference>
<dbReference type="PRINTS" id="PR00474">
    <property type="entry name" value="GLU5KINASE"/>
</dbReference>
<dbReference type="SMART" id="SM00359">
    <property type="entry name" value="PUA"/>
    <property type="match status" value="1"/>
</dbReference>
<dbReference type="SUPFAM" id="SSF53633">
    <property type="entry name" value="Carbamate kinase-like"/>
    <property type="match status" value="1"/>
</dbReference>
<dbReference type="SUPFAM" id="SSF88697">
    <property type="entry name" value="PUA domain-like"/>
    <property type="match status" value="1"/>
</dbReference>
<dbReference type="PROSITE" id="PS00902">
    <property type="entry name" value="GLUTAMATE_5_KINASE"/>
    <property type="match status" value="1"/>
</dbReference>
<dbReference type="PROSITE" id="PS50890">
    <property type="entry name" value="PUA"/>
    <property type="match status" value="1"/>
</dbReference>